<dbReference type="EC" id="2.4.2.9" evidence="1"/>
<dbReference type="EMBL" id="CP001581">
    <property type="protein sequence ID" value="ACO85291.1"/>
    <property type="molecule type" value="Genomic_DNA"/>
</dbReference>
<dbReference type="RefSeq" id="WP_003360558.1">
    <property type="nucleotide sequence ID" value="NC_012563.1"/>
</dbReference>
<dbReference type="SMR" id="C1FQA3"/>
<dbReference type="GeneID" id="5184400"/>
<dbReference type="KEGG" id="cby:CLM_0188"/>
<dbReference type="eggNOG" id="COG0035">
    <property type="taxonomic scope" value="Bacteria"/>
</dbReference>
<dbReference type="HOGENOM" id="CLU_067096_2_2_9"/>
<dbReference type="UniPathway" id="UPA00574">
    <property type="reaction ID" value="UER00636"/>
</dbReference>
<dbReference type="Proteomes" id="UP000001374">
    <property type="component" value="Chromosome"/>
</dbReference>
<dbReference type="GO" id="GO:0005525">
    <property type="term" value="F:GTP binding"/>
    <property type="evidence" value="ECO:0007669"/>
    <property type="project" value="UniProtKB-KW"/>
</dbReference>
<dbReference type="GO" id="GO:0000287">
    <property type="term" value="F:magnesium ion binding"/>
    <property type="evidence" value="ECO:0007669"/>
    <property type="project" value="UniProtKB-UniRule"/>
</dbReference>
<dbReference type="GO" id="GO:0004845">
    <property type="term" value="F:uracil phosphoribosyltransferase activity"/>
    <property type="evidence" value="ECO:0007669"/>
    <property type="project" value="UniProtKB-UniRule"/>
</dbReference>
<dbReference type="GO" id="GO:0044206">
    <property type="term" value="P:UMP salvage"/>
    <property type="evidence" value="ECO:0007669"/>
    <property type="project" value="UniProtKB-UniRule"/>
</dbReference>
<dbReference type="GO" id="GO:0006223">
    <property type="term" value="P:uracil salvage"/>
    <property type="evidence" value="ECO:0007669"/>
    <property type="project" value="InterPro"/>
</dbReference>
<dbReference type="CDD" id="cd06223">
    <property type="entry name" value="PRTases_typeI"/>
    <property type="match status" value="1"/>
</dbReference>
<dbReference type="FunFam" id="3.40.50.2020:FF:000003">
    <property type="entry name" value="Uracil phosphoribosyltransferase"/>
    <property type="match status" value="1"/>
</dbReference>
<dbReference type="Gene3D" id="3.40.50.2020">
    <property type="match status" value="1"/>
</dbReference>
<dbReference type="HAMAP" id="MF_01218_B">
    <property type="entry name" value="Upp_B"/>
    <property type="match status" value="1"/>
</dbReference>
<dbReference type="InterPro" id="IPR000836">
    <property type="entry name" value="PRibTrfase_dom"/>
</dbReference>
<dbReference type="InterPro" id="IPR029057">
    <property type="entry name" value="PRTase-like"/>
</dbReference>
<dbReference type="InterPro" id="IPR034332">
    <property type="entry name" value="Upp_B"/>
</dbReference>
<dbReference type="InterPro" id="IPR050054">
    <property type="entry name" value="UPRTase/APRTase"/>
</dbReference>
<dbReference type="InterPro" id="IPR005765">
    <property type="entry name" value="Ura_phspho_trans"/>
</dbReference>
<dbReference type="NCBIfam" id="NF001097">
    <property type="entry name" value="PRK00129.1"/>
    <property type="match status" value="1"/>
</dbReference>
<dbReference type="NCBIfam" id="TIGR01091">
    <property type="entry name" value="upp"/>
    <property type="match status" value="1"/>
</dbReference>
<dbReference type="PANTHER" id="PTHR32315">
    <property type="entry name" value="ADENINE PHOSPHORIBOSYLTRANSFERASE"/>
    <property type="match status" value="1"/>
</dbReference>
<dbReference type="PANTHER" id="PTHR32315:SF4">
    <property type="entry name" value="URACIL PHOSPHORIBOSYLTRANSFERASE, CHLOROPLASTIC"/>
    <property type="match status" value="1"/>
</dbReference>
<dbReference type="Pfam" id="PF14681">
    <property type="entry name" value="UPRTase"/>
    <property type="match status" value="1"/>
</dbReference>
<dbReference type="SUPFAM" id="SSF53271">
    <property type="entry name" value="PRTase-like"/>
    <property type="match status" value="1"/>
</dbReference>
<sequence length="209" mass="22869">MSKVTQIAHPLILHKLALIRDKNTGSKDFRELVEEVAMLMAYEVTRDLQLKEVEIETPICKTKCKMLSGKKVAIVPILRAGLGMVGGMTSLIPAAKVGHIGLYRDEETLKPVEYFCKLPQDIGDRDVIVTDPMLATGGSAKDAITLLKQKGAKHIRLMCLVAAPEGIKEVMDEHPDVDIYVASVDEKLNEKGYVVPGLGDAGDRLYGTK</sequence>
<evidence type="ECO:0000255" key="1">
    <source>
        <dbReference type="HAMAP-Rule" id="MF_01218"/>
    </source>
</evidence>
<protein>
    <recommendedName>
        <fullName evidence="1">Uracil phosphoribosyltransferase</fullName>
        <ecNumber evidence="1">2.4.2.9</ecNumber>
    </recommendedName>
    <alternativeName>
        <fullName evidence="1">UMP pyrophosphorylase</fullName>
    </alternativeName>
    <alternativeName>
        <fullName evidence="1">UPRTase</fullName>
    </alternativeName>
</protein>
<gene>
    <name evidence="1" type="primary">upp</name>
    <name type="ordered locus">CLM_0188</name>
</gene>
<organism>
    <name type="scientific">Clostridium botulinum (strain Kyoto / Type A2)</name>
    <dbReference type="NCBI Taxonomy" id="536232"/>
    <lineage>
        <taxon>Bacteria</taxon>
        <taxon>Bacillati</taxon>
        <taxon>Bacillota</taxon>
        <taxon>Clostridia</taxon>
        <taxon>Eubacteriales</taxon>
        <taxon>Clostridiaceae</taxon>
        <taxon>Clostridium</taxon>
    </lineage>
</organism>
<proteinExistence type="inferred from homology"/>
<accession>C1FQA3</accession>
<reference key="1">
    <citation type="submission" date="2008-10" db="EMBL/GenBank/DDBJ databases">
        <title>Genome sequence of Clostridium botulinum A2 Kyoto.</title>
        <authorList>
            <person name="Shrivastava S."/>
            <person name="Brinkac L.M."/>
            <person name="Brown J.L."/>
            <person name="Bruce D."/>
            <person name="Detter C.C."/>
            <person name="Johnson E.A."/>
            <person name="Munk C.A."/>
            <person name="Smith L.A."/>
            <person name="Smith T.J."/>
            <person name="Sutton G."/>
            <person name="Brettin T.S."/>
        </authorList>
    </citation>
    <scope>NUCLEOTIDE SEQUENCE [LARGE SCALE GENOMIC DNA]</scope>
    <source>
        <strain>Kyoto / Type A2</strain>
    </source>
</reference>
<feature type="chain" id="PRO_1000164816" description="Uracil phosphoribosyltransferase">
    <location>
        <begin position="1"/>
        <end position="209"/>
    </location>
</feature>
<feature type="binding site" evidence="1">
    <location>
        <position position="79"/>
    </location>
    <ligand>
        <name>5-phospho-alpha-D-ribose 1-diphosphate</name>
        <dbReference type="ChEBI" id="CHEBI:58017"/>
    </ligand>
</feature>
<feature type="binding site" evidence="1">
    <location>
        <position position="104"/>
    </location>
    <ligand>
        <name>5-phospho-alpha-D-ribose 1-diphosphate</name>
        <dbReference type="ChEBI" id="CHEBI:58017"/>
    </ligand>
</feature>
<feature type="binding site" evidence="1">
    <location>
        <begin position="131"/>
        <end position="139"/>
    </location>
    <ligand>
        <name>5-phospho-alpha-D-ribose 1-diphosphate</name>
        <dbReference type="ChEBI" id="CHEBI:58017"/>
    </ligand>
</feature>
<feature type="binding site" evidence="1">
    <location>
        <position position="194"/>
    </location>
    <ligand>
        <name>uracil</name>
        <dbReference type="ChEBI" id="CHEBI:17568"/>
    </ligand>
</feature>
<feature type="binding site" evidence="1">
    <location>
        <begin position="199"/>
        <end position="201"/>
    </location>
    <ligand>
        <name>uracil</name>
        <dbReference type="ChEBI" id="CHEBI:17568"/>
    </ligand>
</feature>
<feature type="binding site" evidence="1">
    <location>
        <position position="200"/>
    </location>
    <ligand>
        <name>5-phospho-alpha-D-ribose 1-diphosphate</name>
        <dbReference type="ChEBI" id="CHEBI:58017"/>
    </ligand>
</feature>
<comment type="function">
    <text evidence="1">Catalyzes the conversion of uracil and 5-phospho-alpha-D-ribose 1-diphosphate (PRPP) to UMP and diphosphate.</text>
</comment>
<comment type="catalytic activity">
    <reaction evidence="1">
        <text>UMP + diphosphate = 5-phospho-alpha-D-ribose 1-diphosphate + uracil</text>
        <dbReference type="Rhea" id="RHEA:13017"/>
        <dbReference type="ChEBI" id="CHEBI:17568"/>
        <dbReference type="ChEBI" id="CHEBI:33019"/>
        <dbReference type="ChEBI" id="CHEBI:57865"/>
        <dbReference type="ChEBI" id="CHEBI:58017"/>
        <dbReference type="EC" id="2.4.2.9"/>
    </reaction>
</comment>
<comment type="cofactor">
    <cofactor evidence="1">
        <name>Mg(2+)</name>
        <dbReference type="ChEBI" id="CHEBI:18420"/>
    </cofactor>
    <text evidence="1">Binds 1 Mg(2+) ion per subunit. The magnesium is bound as Mg-PRPP.</text>
</comment>
<comment type="activity regulation">
    <text evidence="1">Allosterically activated by GTP.</text>
</comment>
<comment type="pathway">
    <text evidence="1">Pyrimidine metabolism; UMP biosynthesis via salvage pathway; UMP from uracil: step 1/1.</text>
</comment>
<comment type="similarity">
    <text evidence="1">Belongs to the UPRTase family.</text>
</comment>
<keyword id="KW-0021">Allosteric enzyme</keyword>
<keyword id="KW-0328">Glycosyltransferase</keyword>
<keyword id="KW-0342">GTP-binding</keyword>
<keyword id="KW-0460">Magnesium</keyword>
<keyword id="KW-0547">Nucleotide-binding</keyword>
<keyword id="KW-0808">Transferase</keyword>
<name>UPP_CLOBJ</name>